<dbReference type="EMBL" id="AJ965256">
    <property type="protein sequence ID" value="CAI83086.1"/>
    <property type="molecule type" value="Genomic_DNA"/>
</dbReference>
<dbReference type="RefSeq" id="WP_011309437.1">
    <property type="nucleotide sequence ID" value="NC_007356.1"/>
</dbReference>
<dbReference type="SMR" id="Q3ZXX4"/>
<dbReference type="KEGG" id="deh:cbdbB20"/>
<dbReference type="HOGENOM" id="CLU_190949_0_2_0"/>
<dbReference type="Proteomes" id="UP000000433">
    <property type="component" value="Chromosome"/>
</dbReference>
<dbReference type="GO" id="GO:0005737">
    <property type="term" value="C:cytoplasm"/>
    <property type="evidence" value="ECO:0007669"/>
    <property type="project" value="UniProtKB-ARBA"/>
</dbReference>
<dbReference type="GO" id="GO:1990904">
    <property type="term" value="C:ribonucleoprotein complex"/>
    <property type="evidence" value="ECO:0007669"/>
    <property type="project" value="UniProtKB-KW"/>
</dbReference>
<dbReference type="GO" id="GO:0005840">
    <property type="term" value="C:ribosome"/>
    <property type="evidence" value="ECO:0007669"/>
    <property type="project" value="UniProtKB-KW"/>
</dbReference>
<dbReference type="GO" id="GO:0003735">
    <property type="term" value="F:structural constituent of ribosome"/>
    <property type="evidence" value="ECO:0007669"/>
    <property type="project" value="InterPro"/>
</dbReference>
<dbReference type="GO" id="GO:0006412">
    <property type="term" value="P:translation"/>
    <property type="evidence" value="ECO:0007669"/>
    <property type="project" value="UniProtKB-UniRule"/>
</dbReference>
<dbReference type="Gene3D" id="2.20.28.120">
    <property type="entry name" value="Ribosomal protein L33"/>
    <property type="match status" value="1"/>
</dbReference>
<dbReference type="HAMAP" id="MF_00294">
    <property type="entry name" value="Ribosomal_bL33"/>
    <property type="match status" value="1"/>
</dbReference>
<dbReference type="InterPro" id="IPR001705">
    <property type="entry name" value="Ribosomal_bL33"/>
</dbReference>
<dbReference type="InterPro" id="IPR018264">
    <property type="entry name" value="Ribosomal_bL33_CS"/>
</dbReference>
<dbReference type="InterPro" id="IPR038584">
    <property type="entry name" value="Ribosomal_bL33_sf"/>
</dbReference>
<dbReference type="InterPro" id="IPR011332">
    <property type="entry name" value="Ribosomal_zn-bd"/>
</dbReference>
<dbReference type="NCBIfam" id="NF001764">
    <property type="entry name" value="PRK00504.1"/>
    <property type="match status" value="1"/>
</dbReference>
<dbReference type="NCBIfam" id="NF001860">
    <property type="entry name" value="PRK00595.1"/>
    <property type="match status" value="1"/>
</dbReference>
<dbReference type="NCBIfam" id="TIGR01023">
    <property type="entry name" value="rpmG_bact"/>
    <property type="match status" value="1"/>
</dbReference>
<dbReference type="PANTHER" id="PTHR43168">
    <property type="entry name" value="50S RIBOSOMAL PROTEIN L33, CHLOROPLASTIC"/>
    <property type="match status" value="1"/>
</dbReference>
<dbReference type="PANTHER" id="PTHR43168:SF2">
    <property type="entry name" value="LARGE RIBOSOMAL SUBUNIT PROTEIN BL33C"/>
    <property type="match status" value="1"/>
</dbReference>
<dbReference type="Pfam" id="PF00471">
    <property type="entry name" value="Ribosomal_L33"/>
    <property type="match status" value="1"/>
</dbReference>
<dbReference type="SUPFAM" id="SSF57829">
    <property type="entry name" value="Zn-binding ribosomal proteins"/>
    <property type="match status" value="1"/>
</dbReference>
<dbReference type="PROSITE" id="PS00582">
    <property type="entry name" value="RIBOSOMAL_L33"/>
    <property type="match status" value="1"/>
</dbReference>
<accession>Q3ZXX4</accession>
<proteinExistence type="inferred from homology"/>
<protein>
    <recommendedName>
        <fullName evidence="1">Large ribosomal subunit protein bL33</fullName>
    </recommendedName>
    <alternativeName>
        <fullName evidence="2">50S ribosomal protein L33</fullName>
    </alternativeName>
</protein>
<sequence length="55" mass="6560">MAKKTDTRIVINMACTDCGERNYTTEKNKRNDPRRIELSKYCPRCREAKVHRETK</sequence>
<evidence type="ECO:0000255" key="1">
    <source>
        <dbReference type="HAMAP-Rule" id="MF_00294"/>
    </source>
</evidence>
<evidence type="ECO:0000305" key="2"/>
<feature type="chain" id="PRO_0000356446" description="Large ribosomal subunit protein bL33">
    <location>
        <begin position="1"/>
        <end position="55"/>
    </location>
</feature>
<keyword id="KW-0687">Ribonucleoprotein</keyword>
<keyword id="KW-0689">Ribosomal protein</keyword>
<gene>
    <name evidence="1" type="primary">rpmG</name>
    <name type="ordered locus">cbdbA959.1</name>
    <name type="ORF">cbdbB20</name>
</gene>
<organism>
    <name type="scientific">Dehalococcoides mccartyi (strain CBDB1)</name>
    <dbReference type="NCBI Taxonomy" id="255470"/>
    <lineage>
        <taxon>Bacteria</taxon>
        <taxon>Bacillati</taxon>
        <taxon>Chloroflexota</taxon>
        <taxon>Dehalococcoidia</taxon>
        <taxon>Dehalococcoidales</taxon>
        <taxon>Dehalococcoidaceae</taxon>
        <taxon>Dehalococcoides</taxon>
    </lineage>
</organism>
<name>RL33_DEHMC</name>
<comment type="similarity">
    <text evidence="1">Belongs to the bacterial ribosomal protein bL33 family.</text>
</comment>
<reference key="1">
    <citation type="journal article" date="2005" name="Nat. Biotechnol.">
        <title>Genome sequence of the chlorinated compound-respiring bacterium Dehalococcoides species strain CBDB1.</title>
        <authorList>
            <person name="Kube M."/>
            <person name="Beck A."/>
            <person name="Zinder S.H."/>
            <person name="Kuhl H."/>
            <person name="Reinhardt R."/>
            <person name="Adrian L."/>
        </authorList>
    </citation>
    <scope>NUCLEOTIDE SEQUENCE [LARGE SCALE GENOMIC DNA]</scope>
    <source>
        <strain>CBDB1</strain>
    </source>
</reference>